<feature type="chain" id="PRO_0000368883" description="ATP synthase subunit b">
    <location>
        <begin position="1"/>
        <end position="156"/>
    </location>
</feature>
<feature type="transmembrane region" description="Helical" evidence="1">
    <location>
        <begin position="11"/>
        <end position="31"/>
    </location>
</feature>
<reference key="1">
    <citation type="submission" date="2008-04" db="EMBL/GenBank/DDBJ databases">
        <title>Complete sequence of Yersinia pseudotuberculosis PB1/+.</title>
        <authorList>
            <person name="Copeland A."/>
            <person name="Lucas S."/>
            <person name="Lapidus A."/>
            <person name="Glavina del Rio T."/>
            <person name="Dalin E."/>
            <person name="Tice H."/>
            <person name="Bruce D."/>
            <person name="Goodwin L."/>
            <person name="Pitluck S."/>
            <person name="Munk A.C."/>
            <person name="Brettin T."/>
            <person name="Detter J.C."/>
            <person name="Han C."/>
            <person name="Tapia R."/>
            <person name="Schmutz J."/>
            <person name="Larimer F."/>
            <person name="Land M."/>
            <person name="Hauser L."/>
            <person name="Challacombe J.F."/>
            <person name="Green L."/>
            <person name="Lindler L.E."/>
            <person name="Nikolich M.P."/>
            <person name="Richardson P."/>
        </authorList>
    </citation>
    <scope>NUCLEOTIDE SEQUENCE [LARGE SCALE GENOMIC DNA]</scope>
    <source>
        <strain>PB1/+</strain>
    </source>
</reference>
<sequence>MNLNATILGQAIAFVLFVIFCMKYVWPPIMAAIEKRQQEIADGLSSAERAKKDLDLAQANATDQLKKAKAEAQVIIEQASKRKAQILDEAKAEAEQERNKIVAQAQAEIDAERKRAREELRKQVAMLAIAGAEKIIERSVDEAANSDIVDKLVAEL</sequence>
<gene>
    <name evidence="1" type="primary">atpF</name>
    <name type="ordered locus">YPTS_4176</name>
</gene>
<protein>
    <recommendedName>
        <fullName evidence="1">ATP synthase subunit b</fullName>
    </recommendedName>
    <alternativeName>
        <fullName evidence="1">ATP synthase F(0) sector subunit b</fullName>
    </alternativeName>
    <alternativeName>
        <fullName evidence="1">ATPase subunit I</fullName>
    </alternativeName>
    <alternativeName>
        <fullName evidence="1">F-type ATPase subunit b</fullName>
        <shortName evidence="1">F-ATPase subunit b</shortName>
    </alternativeName>
</protein>
<name>ATPF_YERPB</name>
<dbReference type="EMBL" id="CP001048">
    <property type="protein sequence ID" value="ACC91119.1"/>
    <property type="molecule type" value="Genomic_DNA"/>
</dbReference>
<dbReference type="RefSeq" id="WP_002220762.1">
    <property type="nucleotide sequence ID" value="NZ_CP009780.1"/>
</dbReference>
<dbReference type="SMR" id="B2K843"/>
<dbReference type="GeneID" id="57974599"/>
<dbReference type="KEGG" id="ypb:YPTS_4176"/>
<dbReference type="PATRIC" id="fig|502801.10.peg.3647"/>
<dbReference type="GO" id="GO:0005886">
    <property type="term" value="C:plasma membrane"/>
    <property type="evidence" value="ECO:0007669"/>
    <property type="project" value="UniProtKB-SubCell"/>
</dbReference>
<dbReference type="GO" id="GO:0045259">
    <property type="term" value="C:proton-transporting ATP synthase complex"/>
    <property type="evidence" value="ECO:0007669"/>
    <property type="project" value="UniProtKB-KW"/>
</dbReference>
<dbReference type="GO" id="GO:0046933">
    <property type="term" value="F:proton-transporting ATP synthase activity, rotational mechanism"/>
    <property type="evidence" value="ECO:0007669"/>
    <property type="project" value="UniProtKB-UniRule"/>
</dbReference>
<dbReference type="GO" id="GO:0046961">
    <property type="term" value="F:proton-transporting ATPase activity, rotational mechanism"/>
    <property type="evidence" value="ECO:0007669"/>
    <property type="project" value="TreeGrafter"/>
</dbReference>
<dbReference type="CDD" id="cd06503">
    <property type="entry name" value="ATP-synt_Fo_b"/>
    <property type="match status" value="1"/>
</dbReference>
<dbReference type="FunFam" id="1.20.5.620:FF:000001">
    <property type="entry name" value="ATP synthase subunit b"/>
    <property type="match status" value="1"/>
</dbReference>
<dbReference type="Gene3D" id="1.20.5.620">
    <property type="entry name" value="F1F0 ATP synthase subunit B, membrane domain"/>
    <property type="match status" value="1"/>
</dbReference>
<dbReference type="HAMAP" id="MF_01398">
    <property type="entry name" value="ATP_synth_b_bprime"/>
    <property type="match status" value="1"/>
</dbReference>
<dbReference type="InterPro" id="IPR028987">
    <property type="entry name" value="ATP_synth_B-like_membr_sf"/>
</dbReference>
<dbReference type="InterPro" id="IPR002146">
    <property type="entry name" value="ATP_synth_b/b'su_bac/chlpt"/>
</dbReference>
<dbReference type="InterPro" id="IPR005864">
    <property type="entry name" value="ATP_synth_F0_bsu_bac"/>
</dbReference>
<dbReference type="InterPro" id="IPR050059">
    <property type="entry name" value="ATP_synthase_B_chain"/>
</dbReference>
<dbReference type="NCBIfam" id="TIGR01144">
    <property type="entry name" value="ATP_synt_b"/>
    <property type="match status" value="1"/>
</dbReference>
<dbReference type="NCBIfam" id="NF004411">
    <property type="entry name" value="PRK05759.1-2"/>
    <property type="match status" value="1"/>
</dbReference>
<dbReference type="NCBIfam" id="NF004413">
    <property type="entry name" value="PRK05759.1-4"/>
    <property type="match status" value="1"/>
</dbReference>
<dbReference type="PANTHER" id="PTHR33445:SF1">
    <property type="entry name" value="ATP SYNTHASE SUBUNIT B"/>
    <property type="match status" value="1"/>
</dbReference>
<dbReference type="PANTHER" id="PTHR33445">
    <property type="entry name" value="ATP SYNTHASE SUBUNIT B', CHLOROPLASTIC"/>
    <property type="match status" value="1"/>
</dbReference>
<dbReference type="Pfam" id="PF00430">
    <property type="entry name" value="ATP-synt_B"/>
    <property type="match status" value="1"/>
</dbReference>
<dbReference type="SUPFAM" id="SSF81573">
    <property type="entry name" value="F1F0 ATP synthase subunit B, membrane domain"/>
    <property type="match status" value="1"/>
</dbReference>
<accession>B2K843</accession>
<comment type="function">
    <text evidence="1">F(1)F(0) ATP synthase produces ATP from ADP in the presence of a proton or sodium gradient. F-type ATPases consist of two structural domains, F(1) containing the extramembraneous catalytic core and F(0) containing the membrane proton channel, linked together by a central stalk and a peripheral stalk. During catalysis, ATP synthesis in the catalytic domain of F(1) is coupled via a rotary mechanism of the central stalk subunits to proton translocation.</text>
</comment>
<comment type="function">
    <text evidence="1">Component of the F(0) channel, it forms part of the peripheral stalk, linking F(1) to F(0).</text>
</comment>
<comment type="subunit">
    <text evidence="1">F-type ATPases have 2 components, F(1) - the catalytic core - and F(0) - the membrane proton channel. F(1) has five subunits: alpha(3), beta(3), gamma(1), delta(1), epsilon(1). F(0) has three main subunits: a(1), b(2) and c(10-14). The alpha and beta chains form an alternating ring which encloses part of the gamma chain. F(1) is attached to F(0) by a central stalk formed by the gamma and epsilon chains, while a peripheral stalk is formed by the delta and b chains.</text>
</comment>
<comment type="subcellular location">
    <subcellularLocation>
        <location evidence="1">Cell inner membrane</location>
        <topology evidence="1">Single-pass membrane protein</topology>
    </subcellularLocation>
</comment>
<comment type="similarity">
    <text evidence="1">Belongs to the ATPase B chain family.</text>
</comment>
<organism>
    <name type="scientific">Yersinia pseudotuberculosis serotype IB (strain PB1/+)</name>
    <dbReference type="NCBI Taxonomy" id="502801"/>
    <lineage>
        <taxon>Bacteria</taxon>
        <taxon>Pseudomonadati</taxon>
        <taxon>Pseudomonadota</taxon>
        <taxon>Gammaproteobacteria</taxon>
        <taxon>Enterobacterales</taxon>
        <taxon>Yersiniaceae</taxon>
        <taxon>Yersinia</taxon>
    </lineage>
</organism>
<proteinExistence type="inferred from homology"/>
<evidence type="ECO:0000255" key="1">
    <source>
        <dbReference type="HAMAP-Rule" id="MF_01398"/>
    </source>
</evidence>
<keyword id="KW-0066">ATP synthesis</keyword>
<keyword id="KW-0997">Cell inner membrane</keyword>
<keyword id="KW-1003">Cell membrane</keyword>
<keyword id="KW-0138">CF(0)</keyword>
<keyword id="KW-0375">Hydrogen ion transport</keyword>
<keyword id="KW-0406">Ion transport</keyword>
<keyword id="KW-0472">Membrane</keyword>
<keyword id="KW-0812">Transmembrane</keyword>
<keyword id="KW-1133">Transmembrane helix</keyword>
<keyword id="KW-0813">Transport</keyword>